<dbReference type="EC" id="2.7.1.147"/>
<dbReference type="EMBL" id="FO080633">
    <property type="protein sequence ID" value="CCD65339.1"/>
    <property type="molecule type" value="Genomic_DNA"/>
</dbReference>
<dbReference type="RefSeq" id="NP_493657.2">
    <property type="nucleotide sequence ID" value="NM_061256.4"/>
</dbReference>
<dbReference type="SMR" id="Q86S40"/>
<dbReference type="BioGRID" id="38773">
    <property type="interactions" value="1"/>
</dbReference>
<dbReference type="FunCoup" id="Q86S40">
    <property type="interactions" value="2412"/>
</dbReference>
<dbReference type="STRING" id="6239.C50D2.7.1"/>
<dbReference type="iPTMnet" id="Q86S40"/>
<dbReference type="PaxDb" id="6239-C50D2.7"/>
<dbReference type="PeptideAtlas" id="Q86S40"/>
<dbReference type="EnsemblMetazoa" id="C50D2.7.1">
    <property type="protein sequence ID" value="C50D2.7.1"/>
    <property type="gene ID" value="WBGene00016810"/>
</dbReference>
<dbReference type="GeneID" id="173393"/>
<dbReference type="KEGG" id="cel:CELE_C50D2.7"/>
<dbReference type="UCSC" id="C50D2.7.1">
    <property type="organism name" value="c. elegans"/>
</dbReference>
<dbReference type="AGR" id="WB:WBGene00016810"/>
<dbReference type="CTD" id="173393"/>
<dbReference type="WormBase" id="C50D2.7">
    <property type="protein sequence ID" value="CE33040"/>
    <property type="gene ID" value="WBGene00016810"/>
</dbReference>
<dbReference type="eggNOG" id="KOG4184">
    <property type="taxonomic scope" value="Eukaryota"/>
</dbReference>
<dbReference type="GeneTree" id="ENSGT00390000017953"/>
<dbReference type="HOGENOM" id="CLU_032362_0_0_1"/>
<dbReference type="InParanoid" id="Q86S40"/>
<dbReference type="OMA" id="FIHYMGR"/>
<dbReference type="OrthoDB" id="5847021at2759"/>
<dbReference type="PhylomeDB" id="Q86S40"/>
<dbReference type="Reactome" id="R-CEL-70171">
    <property type="pathway name" value="Glycolysis"/>
</dbReference>
<dbReference type="UniPathway" id="UPA00109"/>
<dbReference type="PRO" id="PR:Q86S40"/>
<dbReference type="Proteomes" id="UP000001940">
    <property type="component" value="Chromosome II"/>
</dbReference>
<dbReference type="Bgee" id="WBGene00016810">
    <property type="expression patterns" value="Expressed in pharyngeal muscle cell (C elegans) and 3 other cell types or tissues"/>
</dbReference>
<dbReference type="GO" id="GO:0005783">
    <property type="term" value="C:endoplasmic reticulum"/>
    <property type="evidence" value="ECO:0000318"/>
    <property type="project" value="GO_Central"/>
</dbReference>
<dbReference type="GO" id="GO:0005576">
    <property type="term" value="C:extracellular region"/>
    <property type="evidence" value="ECO:0007669"/>
    <property type="project" value="UniProtKB-SubCell"/>
</dbReference>
<dbReference type="GO" id="GO:0043843">
    <property type="term" value="F:ADP-specific glucokinase activity"/>
    <property type="evidence" value="ECO:0000318"/>
    <property type="project" value="GO_Central"/>
</dbReference>
<dbReference type="GO" id="GO:0046872">
    <property type="term" value="F:metal ion binding"/>
    <property type="evidence" value="ECO:0007669"/>
    <property type="project" value="UniProtKB-KW"/>
</dbReference>
<dbReference type="GO" id="GO:0006006">
    <property type="term" value="P:glucose metabolic process"/>
    <property type="evidence" value="ECO:0000318"/>
    <property type="project" value="GO_Central"/>
</dbReference>
<dbReference type="GO" id="GO:0006096">
    <property type="term" value="P:glycolytic process"/>
    <property type="evidence" value="ECO:0007669"/>
    <property type="project" value="UniProtKB-UniPathway"/>
</dbReference>
<dbReference type="CDD" id="cd01938">
    <property type="entry name" value="ADPGK_ADPPFK"/>
    <property type="match status" value="1"/>
</dbReference>
<dbReference type="Gene3D" id="3.40.1190.20">
    <property type="match status" value="1"/>
</dbReference>
<dbReference type="InterPro" id="IPR007666">
    <property type="entry name" value="ADP_PFK/GK"/>
</dbReference>
<dbReference type="InterPro" id="IPR029056">
    <property type="entry name" value="Ribokinase-like"/>
</dbReference>
<dbReference type="PANTHER" id="PTHR21208">
    <property type="entry name" value="ADP-DEPENDENT GLUCOKINASE"/>
    <property type="match status" value="1"/>
</dbReference>
<dbReference type="PANTHER" id="PTHR21208:SF0">
    <property type="entry name" value="ADP-DEPENDENT GLUCOKINASE"/>
    <property type="match status" value="1"/>
</dbReference>
<dbReference type="Pfam" id="PF04587">
    <property type="entry name" value="ADP_PFK_GK"/>
    <property type="match status" value="1"/>
</dbReference>
<dbReference type="SUPFAM" id="SSF53613">
    <property type="entry name" value="Ribokinase-like"/>
    <property type="match status" value="1"/>
</dbReference>
<dbReference type="PROSITE" id="PS51255">
    <property type="entry name" value="ADPK"/>
    <property type="match status" value="1"/>
</dbReference>
<keyword id="KW-0324">Glycolysis</keyword>
<keyword id="KW-0325">Glycoprotein</keyword>
<keyword id="KW-0418">Kinase</keyword>
<keyword id="KW-0460">Magnesium</keyword>
<keyword id="KW-0479">Metal-binding</keyword>
<keyword id="KW-1185">Reference proteome</keyword>
<keyword id="KW-0964">Secreted</keyword>
<keyword id="KW-0732">Signal</keyword>
<keyword id="KW-0808">Transferase</keyword>
<comment type="function">
    <text evidence="1">Catalyzes the phosphorylation of D-glucose to D-glucose 6-phosphate using ADP as the phosphate donor. GDP and CDP can replace ADP, but with reduced efficiency (By similarity).</text>
</comment>
<comment type="catalytic activity">
    <reaction>
        <text>D-glucose + ADP = D-glucose 6-phosphate + AMP + H(+)</text>
        <dbReference type="Rhea" id="RHEA:11460"/>
        <dbReference type="ChEBI" id="CHEBI:4167"/>
        <dbReference type="ChEBI" id="CHEBI:15378"/>
        <dbReference type="ChEBI" id="CHEBI:61548"/>
        <dbReference type="ChEBI" id="CHEBI:456215"/>
        <dbReference type="ChEBI" id="CHEBI:456216"/>
        <dbReference type="EC" id="2.7.1.147"/>
    </reaction>
</comment>
<comment type="cofactor">
    <cofactor evidence="3">
        <name>Mg(2+)</name>
        <dbReference type="ChEBI" id="CHEBI:18420"/>
    </cofactor>
    <text evidence="3">Binds 1 Mg(2+) ion per subunit.</text>
</comment>
<comment type="pathway">
    <text evidence="3">Carbohydrate degradation; glycolysis.</text>
</comment>
<comment type="subunit">
    <text evidence="1">Monomer.</text>
</comment>
<comment type="subcellular location">
    <subcellularLocation>
        <location evidence="5">Secreted</location>
    </subcellularLocation>
</comment>
<comment type="similarity">
    <text evidence="5">Belongs to the ADP-dependent glucokinase family.</text>
</comment>
<proteinExistence type="evidence at protein level"/>
<sequence length="502" mass="56762">MFSETFVPSIFSYKHRLLHLSVLFFIVPYWYSYYNDQHRLSSYSVETAMFLSWERAIVKPGAMFKKAVIGFNCNVDLIVSGVRVVDALNTTCSEGKDQETLETLADLHQTFAHFFQRGAAAERYMSSEDQFNLLVAESEASTRSHHHIGGNAALMADRIAANFPSTEVYLVGPIGPRSQALLHPSVKRTNSTRILKDELHVILEYKQGEILGDWVAPSSSRFITSHDHFSGSMVVMEMFFKAIAQFRPDLVVITGVHLLEFQSKEMRQEKMRLIKRNLLQIPPKVPIHLELGSLADEIFSTDVINKILPYVDSLGINEQELTFLSHIANGPHMEEYPVQAGTVHVHKVVEMLHWLLKTYGRDPTGQIASKTGYRLSRIHFHCLTYHIMVSSGTDWSNLAAGLAAGARIAGRLSCNIGANTMDSELLEIRTPANFVLDKKIEKNYQFEAHNPIASWMREDVLFVFTPVLVCRLPSKTVGIDDAISATGLLYSQFYRLNRPTHW</sequence>
<name>ADPGK_CAEEL</name>
<accession>Q86S40</accession>
<protein>
    <recommendedName>
        <fullName>Probable ADP-dependent glucokinase</fullName>
        <shortName>ADP-GK</shortName>
        <shortName>ADPGK</shortName>
        <ecNumber>2.7.1.147</ecNumber>
    </recommendedName>
</protein>
<gene>
    <name type="ORF">C50D2.7</name>
</gene>
<feature type="signal peptide" evidence="2">
    <location>
        <begin position="1"/>
        <end position="32"/>
    </location>
</feature>
<feature type="chain" id="PRO_0000346790" description="Probable ADP-dependent glucokinase">
    <location>
        <begin position="33"/>
        <end position="502"/>
    </location>
</feature>
<feature type="domain" description="ADPK" evidence="3">
    <location>
        <begin position="44"/>
        <end position="497"/>
    </location>
</feature>
<feature type="active site" description="Proton acceptor" evidence="3">
    <location>
        <position position="481"/>
    </location>
</feature>
<feature type="binding site" evidence="3">
    <location>
        <position position="290"/>
    </location>
    <ligand>
        <name>Mg(2+)</name>
        <dbReference type="ChEBI" id="CHEBI:18420"/>
    </ligand>
</feature>
<feature type="binding site" evidence="3">
    <location>
        <position position="320"/>
    </location>
    <ligand>
        <name>Mg(2+)</name>
        <dbReference type="ChEBI" id="CHEBI:18420"/>
    </ligand>
</feature>
<feature type="binding site" evidence="3">
    <location>
        <position position="481"/>
    </location>
    <ligand>
        <name>Mg(2+)</name>
        <dbReference type="ChEBI" id="CHEBI:18420"/>
    </ligand>
</feature>
<feature type="glycosylation site" description="N-linked (GlcNAc...) asparagine" evidence="4">
    <location>
        <position position="89"/>
    </location>
</feature>
<feature type="glycosylation site" description="N-linked (GlcNAc...) asparagine" evidence="2">
    <location>
        <position position="190"/>
    </location>
</feature>
<evidence type="ECO:0000250" key="1"/>
<evidence type="ECO:0000255" key="2"/>
<evidence type="ECO:0000255" key="3">
    <source>
        <dbReference type="PROSITE-ProRule" id="PRU00584"/>
    </source>
</evidence>
<evidence type="ECO:0000269" key="4">
    <source>
    </source>
</evidence>
<evidence type="ECO:0000305" key="5"/>
<reference key="1">
    <citation type="journal article" date="1998" name="Science">
        <title>Genome sequence of the nematode C. elegans: a platform for investigating biology.</title>
        <authorList>
            <consortium name="The C. elegans sequencing consortium"/>
        </authorList>
    </citation>
    <scope>NUCLEOTIDE SEQUENCE [LARGE SCALE GENOMIC DNA]</scope>
    <source>
        <strain>Bristol N2</strain>
    </source>
</reference>
<reference key="2">
    <citation type="journal article" date="2007" name="Mol. Cell. Proteomics">
        <title>Proteomics reveals N-linked glycoprotein diversity in Caenorhabditis elegans and suggests an atypical translocation mechanism for integral membrane proteins.</title>
        <authorList>
            <person name="Kaji H."/>
            <person name="Kamiie J."/>
            <person name="Kawakami H."/>
            <person name="Kido K."/>
            <person name="Yamauchi Y."/>
            <person name="Shinkawa T."/>
            <person name="Taoka M."/>
            <person name="Takahashi N."/>
            <person name="Isobe T."/>
        </authorList>
    </citation>
    <scope>GLYCOSYLATION [LARGE SCALE ANALYSIS] AT ASN-89</scope>
    <scope>IDENTIFICATION BY MASS SPECTROMETRY</scope>
    <source>
        <strain>Bristol N2</strain>
    </source>
</reference>
<organism>
    <name type="scientific">Caenorhabditis elegans</name>
    <dbReference type="NCBI Taxonomy" id="6239"/>
    <lineage>
        <taxon>Eukaryota</taxon>
        <taxon>Metazoa</taxon>
        <taxon>Ecdysozoa</taxon>
        <taxon>Nematoda</taxon>
        <taxon>Chromadorea</taxon>
        <taxon>Rhabditida</taxon>
        <taxon>Rhabditina</taxon>
        <taxon>Rhabditomorpha</taxon>
        <taxon>Rhabditoidea</taxon>
        <taxon>Rhabditidae</taxon>
        <taxon>Peloderinae</taxon>
        <taxon>Caenorhabditis</taxon>
    </lineage>
</organism>